<gene>
    <name type="primary">EPN3</name>
</gene>
<dbReference type="EMBL" id="AF324241">
    <property type="protein sequence ID" value="AAG45223.1"/>
    <property type="molecule type" value="mRNA"/>
</dbReference>
<dbReference type="EMBL" id="AK000785">
    <property type="protein sequence ID" value="BAA91378.1"/>
    <property type="molecule type" value="mRNA"/>
</dbReference>
<dbReference type="EMBL" id="AK291658">
    <property type="protein sequence ID" value="BAF84347.1"/>
    <property type="molecule type" value="mRNA"/>
</dbReference>
<dbReference type="EMBL" id="AK292977">
    <property type="protein sequence ID" value="BAF85666.1"/>
    <property type="molecule type" value="mRNA"/>
</dbReference>
<dbReference type="EMBL" id="CH471109">
    <property type="protein sequence ID" value="EAW94607.1"/>
    <property type="molecule type" value="Genomic_DNA"/>
</dbReference>
<dbReference type="EMBL" id="BC001038">
    <property type="status" value="NOT_ANNOTATED_CDS"/>
    <property type="molecule type" value="mRNA"/>
</dbReference>
<dbReference type="EMBL" id="BC051365">
    <property type="status" value="NOT_ANNOTATED_CDS"/>
    <property type="molecule type" value="mRNA"/>
</dbReference>
<dbReference type="EMBL" id="BC077722">
    <property type="status" value="NOT_ANNOTATED_CDS"/>
    <property type="molecule type" value="mRNA"/>
</dbReference>
<dbReference type="CCDS" id="CCDS11570.1">
    <molecule id="Q9H201-1"/>
</dbReference>
<dbReference type="RefSeq" id="NP_060427.2">
    <molecule id="Q9H201-1"/>
    <property type="nucleotide sequence ID" value="NM_017957.3"/>
</dbReference>
<dbReference type="SMR" id="Q9H201"/>
<dbReference type="BioGRID" id="120369">
    <property type="interactions" value="61"/>
</dbReference>
<dbReference type="ELM" id="Q9H201"/>
<dbReference type="FunCoup" id="Q9H201">
    <property type="interactions" value="952"/>
</dbReference>
<dbReference type="IntAct" id="Q9H201">
    <property type="interactions" value="35"/>
</dbReference>
<dbReference type="MINT" id="Q9H201"/>
<dbReference type="STRING" id="9606.ENSP00000268933"/>
<dbReference type="GlyGen" id="Q9H201">
    <property type="glycosylation" value="2 sites, 1 O-linked glycan (1 site)"/>
</dbReference>
<dbReference type="iPTMnet" id="Q9H201"/>
<dbReference type="PhosphoSitePlus" id="Q9H201"/>
<dbReference type="BioMuta" id="EPN3"/>
<dbReference type="DMDM" id="41017054"/>
<dbReference type="jPOST" id="Q9H201"/>
<dbReference type="MassIVE" id="Q9H201"/>
<dbReference type="PaxDb" id="9606-ENSP00000268933"/>
<dbReference type="PeptideAtlas" id="Q9H201"/>
<dbReference type="ProteomicsDB" id="80463">
    <molecule id="Q9H201-1"/>
</dbReference>
<dbReference type="ProteomicsDB" id="80464">
    <molecule id="Q9H201-2"/>
</dbReference>
<dbReference type="Pumba" id="Q9H201"/>
<dbReference type="Antibodypedia" id="30580">
    <property type="antibodies" value="132 antibodies from 27 providers"/>
</dbReference>
<dbReference type="DNASU" id="55040"/>
<dbReference type="Ensembl" id="ENST00000268933.8">
    <molecule id="Q9H201-1"/>
    <property type="protein sequence ID" value="ENSP00000268933.3"/>
    <property type="gene ID" value="ENSG00000049283.19"/>
</dbReference>
<dbReference type="Ensembl" id="ENST00000510045.5">
    <molecule id="Q9H201-2"/>
    <property type="protein sequence ID" value="ENSP00000421933.1"/>
    <property type="gene ID" value="ENSG00000049283.19"/>
</dbReference>
<dbReference type="GeneID" id="55040"/>
<dbReference type="KEGG" id="hsa:55040"/>
<dbReference type="MANE-Select" id="ENST00000268933.8">
    <property type="protein sequence ID" value="ENSP00000268933.3"/>
    <property type="RefSeq nucleotide sequence ID" value="NM_017957.3"/>
    <property type="RefSeq protein sequence ID" value="NP_060427.2"/>
</dbReference>
<dbReference type="UCSC" id="uc002ira.5">
    <molecule id="Q9H201-1"/>
    <property type="organism name" value="human"/>
</dbReference>
<dbReference type="AGR" id="HGNC:18235"/>
<dbReference type="CTD" id="55040"/>
<dbReference type="DisGeNET" id="55040"/>
<dbReference type="GeneCards" id="EPN3"/>
<dbReference type="HGNC" id="HGNC:18235">
    <property type="gene designation" value="EPN3"/>
</dbReference>
<dbReference type="HPA" id="ENSG00000049283">
    <property type="expression patterns" value="Tissue enhanced (esophagus, stomach)"/>
</dbReference>
<dbReference type="MIM" id="607264">
    <property type="type" value="gene"/>
</dbReference>
<dbReference type="neXtProt" id="NX_Q9H201"/>
<dbReference type="OpenTargets" id="ENSG00000049283"/>
<dbReference type="PharmGKB" id="PA38513"/>
<dbReference type="VEuPathDB" id="HostDB:ENSG00000049283"/>
<dbReference type="eggNOG" id="KOG2056">
    <property type="taxonomic scope" value="Eukaryota"/>
</dbReference>
<dbReference type="GeneTree" id="ENSGT00940000158217"/>
<dbReference type="HOGENOM" id="CLU_012678_4_2_1"/>
<dbReference type="InParanoid" id="Q9H201"/>
<dbReference type="OMA" id="SGTHESA"/>
<dbReference type="OrthoDB" id="4033880at2759"/>
<dbReference type="PAN-GO" id="Q9H201">
    <property type="GO annotations" value="6 GO annotations based on evolutionary models"/>
</dbReference>
<dbReference type="PhylomeDB" id="Q9H201"/>
<dbReference type="TreeFam" id="TF313361"/>
<dbReference type="PathwayCommons" id="Q9H201"/>
<dbReference type="SignaLink" id="Q9H201"/>
<dbReference type="BioGRID-ORCS" id="55040">
    <property type="hits" value="306 hits in 1153 CRISPR screens"/>
</dbReference>
<dbReference type="GenomeRNAi" id="55040"/>
<dbReference type="Pharos" id="Q9H201">
    <property type="development level" value="Tbio"/>
</dbReference>
<dbReference type="PRO" id="PR:Q9H201"/>
<dbReference type="Proteomes" id="UP000005640">
    <property type="component" value="Chromosome 17"/>
</dbReference>
<dbReference type="RNAct" id="Q9H201">
    <property type="molecule type" value="protein"/>
</dbReference>
<dbReference type="Bgee" id="ENSG00000049283">
    <property type="expression patterns" value="Expressed in lower esophagus mucosa and 95 other cell types or tissues"/>
</dbReference>
<dbReference type="ExpressionAtlas" id="Q9H201">
    <property type="expression patterns" value="baseline and differential"/>
</dbReference>
<dbReference type="GO" id="GO:0030125">
    <property type="term" value="C:clathrin vesicle coat"/>
    <property type="evidence" value="ECO:0000318"/>
    <property type="project" value="GO_Central"/>
</dbReference>
<dbReference type="GO" id="GO:0005905">
    <property type="term" value="C:clathrin-coated pit"/>
    <property type="evidence" value="ECO:0007669"/>
    <property type="project" value="Ensembl"/>
</dbReference>
<dbReference type="GO" id="GO:0030136">
    <property type="term" value="C:clathrin-coated vesicle"/>
    <property type="evidence" value="ECO:0000314"/>
    <property type="project" value="UniProtKB"/>
</dbReference>
<dbReference type="GO" id="GO:0009898">
    <property type="term" value="C:cytoplasmic side of plasma membrane"/>
    <property type="evidence" value="ECO:0000314"/>
    <property type="project" value="UniProtKB"/>
</dbReference>
<dbReference type="GO" id="GO:0005768">
    <property type="term" value="C:endosome"/>
    <property type="evidence" value="ECO:0000318"/>
    <property type="project" value="GO_Central"/>
</dbReference>
<dbReference type="GO" id="GO:0070062">
    <property type="term" value="C:extracellular exosome"/>
    <property type="evidence" value="ECO:0007005"/>
    <property type="project" value="UniProtKB"/>
</dbReference>
<dbReference type="GO" id="GO:0043231">
    <property type="term" value="C:intracellular membrane-bounded organelle"/>
    <property type="evidence" value="ECO:0000314"/>
    <property type="project" value="HPA"/>
</dbReference>
<dbReference type="GO" id="GO:0005654">
    <property type="term" value="C:nucleoplasm"/>
    <property type="evidence" value="ECO:0000314"/>
    <property type="project" value="HPA"/>
</dbReference>
<dbReference type="GO" id="GO:0005634">
    <property type="term" value="C:nucleus"/>
    <property type="evidence" value="ECO:0000314"/>
    <property type="project" value="UniProtKB"/>
</dbReference>
<dbReference type="GO" id="GO:0048471">
    <property type="term" value="C:perinuclear region of cytoplasm"/>
    <property type="evidence" value="ECO:0000314"/>
    <property type="project" value="UniProtKB"/>
</dbReference>
<dbReference type="GO" id="GO:0005886">
    <property type="term" value="C:plasma membrane"/>
    <property type="evidence" value="ECO:0000318"/>
    <property type="project" value="GO_Central"/>
</dbReference>
<dbReference type="GO" id="GO:0030276">
    <property type="term" value="F:clathrin binding"/>
    <property type="evidence" value="ECO:0000318"/>
    <property type="project" value="GO_Central"/>
</dbReference>
<dbReference type="GO" id="GO:1990175">
    <property type="term" value="F:EH domain binding"/>
    <property type="evidence" value="ECO:0007669"/>
    <property type="project" value="Ensembl"/>
</dbReference>
<dbReference type="GO" id="GO:0005543">
    <property type="term" value="F:phospholipid binding"/>
    <property type="evidence" value="ECO:0000318"/>
    <property type="project" value="GO_Central"/>
</dbReference>
<dbReference type="GO" id="GO:0006897">
    <property type="term" value="P:endocytosis"/>
    <property type="evidence" value="ECO:0000318"/>
    <property type="project" value="GO_Central"/>
</dbReference>
<dbReference type="CDD" id="cd16990">
    <property type="entry name" value="ENTH_Epsin"/>
    <property type="match status" value="1"/>
</dbReference>
<dbReference type="FunFam" id="1.25.40.90:FF:000002">
    <property type="entry name" value="epsin-2 isoform X1"/>
    <property type="match status" value="1"/>
</dbReference>
<dbReference type="Gene3D" id="1.25.40.90">
    <property type="match status" value="1"/>
</dbReference>
<dbReference type="InterPro" id="IPR013809">
    <property type="entry name" value="ENTH"/>
</dbReference>
<dbReference type="InterPro" id="IPR008942">
    <property type="entry name" value="ENTH_VHS"/>
</dbReference>
<dbReference type="InterPro" id="IPR003903">
    <property type="entry name" value="UIM_dom"/>
</dbReference>
<dbReference type="PANTHER" id="PTHR12276:SF16">
    <property type="entry name" value="EPSIN-3"/>
    <property type="match status" value="1"/>
</dbReference>
<dbReference type="PANTHER" id="PTHR12276">
    <property type="entry name" value="EPSIN/ENT-RELATED"/>
    <property type="match status" value="1"/>
</dbReference>
<dbReference type="Pfam" id="PF01417">
    <property type="entry name" value="ENTH"/>
    <property type="match status" value="1"/>
</dbReference>
<dbReference type="Pfam" id="PF02809">
    <property type="entry name" value="UIM"/>
    <property type="match status" value="2"/>
</dbReference>
<dbReference type="SMART" id="SM00273">
    <property type="entry name" value="ENTH"/>
    <property type="match status" value="1"/>
</dbReference>
<dbReference type="SMART" id="SM00726">
    <property type="entry name" value="UIM"/>
    <property type="match status" value="2"/>
</dbReference>
<dbReference type="SUPFAM" id="SSF48464">
    <property type="entry name" value="ENTH/VHS domain"/>
    <property type="match status" value="1"/>
</dbReference>
<dbReference type="PROSITE" id="PS50942">
    <property type="entry name" value="ENTH"/>
    <property type="match status" value="1"/>
</dbReference>
<dbReference type="PROSITE" id="PS50330">
    <property type="entry name" value="UIM"/>
    <property type="match status" value="2"/>
</dbReference>
<evidence type="ECO:0000250" key="1"/>
<evidence type="ECO:0000250" key="2">
    <source>
        <dbReference type="UniProtKB" id="Q91W69"/>
    </source>
</evidence>
<evidence type="ECO:0000255" key="3">
    <source>
        <dbReference type="PROSITE-ProRule" id="PRU00213"/>
    </source>
</evidence>
<evidence type="ECO:0000255" key="4">
    <source>
        <dbReference type="PROSITE-ProRule" id="PRU00243"/>
    </source>
</evidence>
<evidence type="ECO:0000256" key="5">
    <source>
        <dbReference type="SAM" id="MobiDB-lite"/>
    </source>
</evidence>
<evidence type="ECO:0000269" key="6">
    <source>
    </source>
</evidence>
<evidence type="ECO:0000269" key="7">
    <source>
    </source>
</evidence>
<evidence type="ECO:0000303" key="8">
    <source>
    </source>
</evidence>
<evidence type="ECO:0000305" key="9"/>
<evidence type="ECO:0000305" key="10">
    <source>
    </source>
</evidence>
<proteinExistence type="evidence at protein level"/>
<feature type="chain" id="PRO_0000074519" description="Epsin-3">
    <location>
        <begin position="1"/>
        <end position="632"/>
    </location>
</feature>
<feature type="domain" description="ENTH" evidence="4">
    <location>
        <begin position="12"/>
        <end position="144"/>
    </location>
</feature>
<feature type="domain" description="UIM 1" evidence="3">
    <location>
        <begin position="209"/>
        <end position="228"/>
    </location>
</feature>
<feature type="domain" description="UIM 2" evidence="3">
    <location>
        <begin position="236"/>
        <end position="255"/>
    </location>
</feature>
<feature type="repeat" description="1">
    <location>
        <begin position="321"/>
        <end position="323"/>
    </location>
</feature>
<feature type="repeat" description="2">
    <location>
        <begin position="344"/>
        <end position="346"/>
    </location>
</feature>
<feature type="repeat" description="3">
    <location>
        <begin position="371"/>
        <end position="373"/>
    </location>
</feature>
<feature type="repeat" description="4">
    <location>
        <begin position="387"/>
        <end position="389"/>
    </location>
</feature>
<feature type="repeat" description="5">
    <location>
        <begin position="404"/>
        <end position="406"/>
    </location>
</feature>
<feature type="repeat" description="1">
    <location>
        <begin position="524"/>
        <end position="526"/>
    </location>
</feature>
<feature type="repeat" description="2">
    <location>
        <begin position="537"/>
        <end position="539"/>
    </location>
</feature>
<feature type="repeat" description="3">
    <location>
        <begin position="629"/>
        <end position="631"/>
    </location>
</feature>
<feature type="region of interest" description="Disordered" evidence="5">
    <location>
        <begin position="172"/>
        <end position="214"/>
    </location>
</feature>
<feature type="region of interest" description="Disordered" evidence="5">
    <location>
        <begin position="257"/>
        <end position="296"/>
    </location>
</feature>
<feature type="region of interest" description="5 X 3 AA repeats of [DE]-P-W">
    <location>
        <begin position="321"/>
        <end position="406"/>
    </location>
</feature>
<feature type="region of interest" description="Disordered" evidence="5">
    <location>
        <begin position="326"/>
        <end position="501"/>
    </location>
</feature>
<feature type="region of interest" description="3 X 3 AA repeats of N-P-F">
    <location>
        <begin position="524"/>
        <end position="631"/>
    </location>
</feature>
<feature type="region of interest" description="Disordered" evidence="5">
    <location>
        <begin position="525"/>
        <end position="560"/>
    </location>
</feature>
<feature type="region of interest" description="Disordered" evidence="5">
    <location>
        <begin position="604"/>
        <end position="632"/>
    </location>
</feature>
<feature type="compositionally biased region" description="Low complexity" evidence="5">
    <location>
        <begin position="179"/>
        <end position="196"/>
    </location>
</feature>
<feature type="compositionally biased region" description="Basic and acidic residues" evidence="5">
    <location>
        <begin position="276"/>
        <end position="294"/>
    </location>
</feature>
<feature type="compositionally biased region" description="Polar residues" evidence="5">
    <location>
        <begin position="353"/>
        <end position="371"/>
    </location>
</feature>
<feature type="binding site" evidence="1">
    <location>
        <position position="8"/>
    </location>
    <ligand>
        <name>a 1,2-diacyl-sn-glycero-3-phospho-(1D-myo-inositol-4,5-bisphosphate)</name>
        <dbReference type="ChEBI" id="CHEBI:58456"/>
    </ligand>
</feature>
<feature type="binding site" evidence="1">
    <location>
        <position position="11"/>
    </location>
    <ligand>
        <name>a 1,2-diacyl-sn-glycero-3-phospho-(1D-myo-inositol-4,5-bisphosphate)</name>
        <dbReference type="ChEBI" id="CHEBI:58456"/>
    </ligand>
</feature>
<feature type="binding site" evidence="1">
    <location>
        <position position="25"/>
    </location>
    <ligand>
        <name>a 1,2-diacyl-sn-glycero-3-phospho-(1D-myo-inositol-4,5-bisphosphate)</name>
        <dbReference type="ChEBI" id="CHEBI:58456"/>
    </ligand>
</feature>
<feature type="binding site" evidence="1">
    <location>
        <position position="30"/>
    </location>
    <ligand>
        <name>a 1,2-diacyl-sn-glycero-3-phospho-(1D-myo-inositol-4,5-bisphosphate)</name>
        <dbReference type="ChEBI" id="CHEBI:58456"/>
    </ligand>
</feature>
<feature type="binding site" evidence="1">
    <location>
        <position position="63"/>
    </location>
    <ligand>
        <name>a 1,2-diacyl-sn-glycero-3-phospho-(1D-myo-inositol-4,5-bisphosphate)</name>
        <dbReference type="ChEBI" id="CHEBI:58456"/>
    </ligand>
</feature>
<feature type="binding site" evidence="1">
    <location>
        <position position="73"/>
    </location>
    <ligand>
        <name>a 1,2-diacyl-sn-glycero-3-phospho-(1D-myo-inositol-4,5-bisphosphate)</name>
        <dbReference type="ChEBI" id="CHEBI:58456"/>
    </ligand>
</feature>
<feature type="modified residue" description="Phosphoserine" evidence="2">
    <location>
        <position position="191"/>
    </location>
</feature>
<feature type="modified residue" description="Phosphoserine" evidence="2">
    <location>
        <position position="192"/>
    </location>
</feature>
<feature type="modified residue" description="Phosphoserine" evidence="2">
    <location>
        <position position="264"/>
    </location>
</feature>
<feature type="splice variant" id="VSP_009158" description="In isoform 2." evidence="8">
    <original>SSSSSPRYTSDLEQARPQTSG</original>
    <variation>CPASDVRGRGTAAAAGPRHEP</variation>
    <location>
        <begin position="188"/>
        <end position="208"/>
    </location>
</feature>
<feature type="splice variant" id="VSP_009159" description="In isoform 2." evidence="8">
    <location>
        <begin position="209"/>
        <end position="632"/>
    </location>
</feature>
<feature type="sequence variant" id="VAR_059973" description="In dbSNP:rs4794159." evidence="7">
    <original>P</original>
    <variation>T</variation>
    <location>
        <position position="544"/>
    </location>
</feature>
<feature type="sequence conflict" description="In Ref. 2; BAF85666." evidence="9" ref="2">
    <original>R</original>
    <variation>K</variation>
    <location>
        <position position="375"/>
    </location>
</feature>
<feature type="sequence conflict" description="In Ref. 2; BAA91378." evidence="9" ref="2">
    <original>H</original>
    <variation>Y</variation>
    <location>
        <position position="396"/>
    </location>
</feature>
<feature type="sequence conflict" description="In Ref. 2; BAF85666." evidence="9" ref="2">
    <original>G</original>
    <variation>S</variation>
    <location>
        <position position="417"/>
    </location>
</feature>
<keyword id="KW-0025">Alternative splicing</keyword>
<keyword id="KW-0963">Cytoplasm</keyword>
<keyword id="KW-0968">Cytoplasmic vesicle</keyword>
<keyword id="KW-0446">Lipid-binding</keyword>
<keyword id="KW-0539">Nucleus</keyword>
<keyword id="KW-0597">Phosphoprotein</keyword>
<keyword id="KW-1267">Proteomics identification</keyword>
<keyword id="KW-1185">Reference proteome</keyword>
<keyword id="KW-0677">Repeat</keyword>
<organism>
    <name type="scientific">Homo sapiens</name>
    <name type="common">Human</name>
    <dbReference type="NCBI Taxonomy" id="9606"/>
    <lineage>
        <taxon>Eukaryota</taxon>
        <taxon>Metazoa</taxon>
        <taxon>Chordata</taxon>
        <taxon>Craniata</taxon>
        <taxon>Vertebrata</taxon>
        <taxon>Euteleostomi</taxon>
        <taxon>Mammalia</taxon>
        <taxon>Eutheria</taxon>
        <taxon>Euarchontoglires</taxon>
        <taxon>Primates</taxon>
        <taxon>Haplorrhini</taxon>
        <taxon>Catarrhini</taxon>
        <taxon>Hominidae</taxon>
        <taxon>Homo</taxon>
    </lineage>
</organism>
<accession>Q9H201</accession>
<accession>A8K6J3</accession>
<accession>A8KAB2</accession>
<accession>Q9BVN6</accession>
<accession>Q9NWK2</accession>
<sequence length="632" mass="68222">MTTSALRRQVKNIVHNYSEAEIKVREATSNDPWGPPSSLMSEIADLTFNTVAFTEVMGMLWRRLNDSGKNWRHVYKALTLLDYLLKTGSERVAHQCRENLYTIQTLKDFQYIDRDGKDQGVNVREKVKQVMALLKDEERLRQERTHALKTKERMALEGIGIGSGQLGFSRRYGEDYSRSRGSPSSYNSSSSSPRYTSDLEQARPQTSGEEELQLQLALAMSREEAEKPVPPASHRDEDLQLQLALRLSRQEHEKEVRSWQGDGSPMANGAGAVVHHQRDREPEREERKEEEKLKTSQSSILDLADIFVPALAPPSTHCSADPWDIPGFRPNTEASGSSWGPSADPWSPIPSGTVLSRSQPWDLTPMLSSSEPWGRTPVLPAGPPTTDPWALNSPHHKLPSTGADPWGASLETSDTPGGASTFDPFAKPPESTETKEGLEQALPSGKPSSPVELDLFGDPSPSSKQNGTKEPDALDLGILGEALTQPSKEARACRTPESFLGPSASSLVNLDSLVKAPQVAKTRNPFLTGLSAPSPTNPFGAGEPGRPTLNQMRTGSPALGLAGGPVGAPLGSMTYSASLPLPLSSVPAGLTLPASVSVFPQAGAFAPQPLLPTPSSAGPRPPPPQTGTNPFL</sequence>
<name>EPN3_HUMAN</name>
<comment type="subcellular location">
    <subcellularLocation>
        <location evidence="6">Cytoplasm</location>
    </subcellularLocation>
    <subcellularLocation>
        <location evidence="6">Cytoplasm</location>
        <location evidence="6">Perinuclear region</location>
    </subcellularLocation>
    <subcellularLocation>
        <location evidence="6">Cytoplasmic vesicle</location>
        <location evidence="6">Clathrin-coated vesicle</location>
    </subcellularLocation>
    <subcellularLocation>
        <location evidence="10">Nucleus</location>
    </subcellularLocation>
    <text>Concentrated in the perinuclear region and associated with clathrin-coated vesicles close to the cell periphery. May shuttle to the nucleus.</text>
</comment>
<comment type="alternative products">
    <event type="alternative splicing"/>
    <isoform>
        <id>Q9H201-1</id>
        <name>1</name>
        <sequence type="displayed"/>
    </isoform>
    <isoform>
        <id>Q9H201-2</id>
        <name>2</name>
        <sequence type="described" ref="VSP_009158 VSP_009159"/>
    </isoform>
</comment>
<comment type="tissue specificity">
    <text evidence="6">Detected in migrating keratinocytes from wounded skin, but not in differentiating keratinocytes or in normal skin. Detected in chronic wounds, basal cell carcinoma and ulcerative colitis.</text>
</comment>
<comment type="induction">
    <text evidence="6">In keratinocytes, by wounding or contact with collagen.</text>
</comment>
<comment type="miscellaneous">
    <molecule>Isoform 2</molecule>
    <text evidence="9">May be produced at very low levels due to a premature stop codon in the mRNA, leading to nonsense-mediated mRNA decay.</text>
</comment>
<comment type="similarity">
    <text evidence="9">Belongs to the epsin family.</text>
</comment>
<reference key="1">
    <citation type="journal article" date="2001" name="J. Biol. Chem.">
        <title>Epsin 3 is a novel extracellular matrix-induced transcript specific to wounded epithelia.</title>
        <authorList>
            <person name="Spradling K.D."/>
            <person name="McDaniel A.E."/>
            <person name="Lohi J."/>
            <person name="Pilcher B.K."/>
        </authorList>
    </citation>
    <scope>NUCLEOTIDE SEQUENCE [MRNA] (ISOFORM 1)</scope>
    <scope>INDUCTION</scope>
    <scope>TISSUE SPECIFICITY</scope>
    <scope>SUBCELLULAR LOCATION</scope>
    <source>
        <tissue>Keratinocyte</tissue>
    </source>
</reference>
<reference key="2">
    <citation type="journal article" date="2004" name="Nat. Genet.">
        <title>Complete sequencing and characterization of 21,243 full-length human cDNAs.</title>
        <authorList>
            <person name="Ota T."/>
            <person name="Suzuki Y."/>
            <person name="Nishikawa T."/>
            <person name="Otsuki T."/>
            <person name="Sugiyama T."/>
            <person name="Irie R."/>
            <person name="Wakamatsu A."/>
            <person name="Hayashi K."/>
            <person name="Sato H."/>
            <person name="Nagai K."/>
            <person name="Kimura K."/>
            <person name="Makita H."/>
            <person name="Sekine M."/>
            <person name="Obayashi M."/>
            <person name="Nishi T."/>
            <person name="Shibahara T."/>
            <person name="Tanaka T."/>
            <person name="Ishii S."/>
            <person name="Yamamoto J."/>
            <person name="Saito K."/>
            <person name="Kawai Y."/>
            <person name="Isono Y."/>
            <person name="Nakamura Y."/>
            <person name="Nagahari K."/>
            <person name="Murakami K."/>
            <person name="Yasuda T."/>
            <person name="Iwayanagi T."/>
            <person name="Wagatsuma M."/>
            <person name="Shiratori A."/>
            <person name="Sudo H."/>
            <person name="Hosoiri T."/>
            <person name="Kaku Y."/>
            <person name="Kodaira H."/>
            <person name="Kondo H."/>
            <person name="Sugawara M."/>
            <person name="Takahashi M."/>
            <person name="Kanda K."/>
            <person name="Yokoi T."/>
            <person name="Furuya T."/>
            <person name="Kikkawa E."/>
            <person name="Omura Y."/>
            <person name="Abe K."/>
            <person name="Kamihara K."/>
            <person name="Katsuta N."/>
            <person name="Sato K."/>
            <person name="Tanikawa M."/>
            <person name="Yamazaki M."/>
            <person name="Ninomiya K."/>
            <person name="Ishibashi T."/>
            <person name="Yamashita H."/>
            <person name="Murakawa K."/>
            <person name="Fujimori K."/>
            <person name="Tanai H."/>
            <person name="Kimata M."/>
            <person name="Watanabe M."/>
            <person name="Hiraoka S."/>
            <person name="Chiba Y."/>
            <person name="Ishida S."/>
            <person name="Ono Y."/>
            <person name="Takiguchi S."/>
            <person name="Watanabe S."/>
            <person name="Yosida M."/>
            <person name="Hotuta T."/>
            <person name="Kusano J."/>
            <person name="Kanehori K."/>
            <person name="Takahashi-Fujii A."/>
            <person name="Hara H."/>
            <person name="Tanase T.-O."/>
            <person name="Nomura Y."/>
            <person name="Togiya S."/>
            <person name="Komai F."/>
            <person name="Hara R."/>
            <person name="Takeuchi K."/>
            <person name="Arita M."/>
            <person name="Imose N."/>
            <person name="Musashino K."/>
            <person name="Yuuki H."/>
            <person name="Oshima A."/>
            <person name="Sasaki N."/>
            <person name="Aotsuka S."/>
            <person name="Yoshikawa Y."/>
            <person name="Matsunawa H."/>
            <person name="Ichihara T."/>
            <person name="Shiohata N."/>
            <person name="Sano S."/>
            <person name="Moriya S."/>
            <person name="Momiyama H."/>
            <person name="Satoh N."/>
            <person name="Takami S."/>
            <person name="Terashima Y."/>
            <person name="Suzuki O."/>
            <person name="Nakagawa S."/>
            <person name="Senoh A."/>
            <person name="Mizoguchi H."/>
            <person name="Goto Y."/>
            <person name="Shimizu F."/>
            <person name="Wakebe H."/>
            <person name="Hishigaki H."/>
            <person name="Watanabe T."/>
            <person name="Sugiyama A."/>
            <person name="Takemoto M."/>
            <person name="Kawakami B."/>
            <person name="Yamazaki M."/>
            <person name="Watanabe K."/>
            <person name="Kumagai A."/>
            <person name="Itakura S."/>
            <person name="Fukuzumi Y."/>
            <person name="Fujimori Y."/>
            <person name="Komiyama M."/>
            <person name="Tashiro H."/>
            <person name="Tanigami A."/>
            <person name="Fujiwara T."/>
            <person name="Ono T."/>
            <person name="Yamada K."/>
            <person name="Fujii Y."/>
            <person name="Ozaki K."/>
            <person name="Hirao M."/>
            <person name="Ohmori Y."/>
            <person name="Kawabata A."/>
            <person name="Hikiji T."/>
            <person name="Kobatake N."/>
            <person name="Inagaki H."/>
            <person name="Ikema Y."/>
            <person name="Okamoto S."/>
            <person name="Okitani R."/>
            <person name="Kawakami T."/>
            <person name="Noguchi S."/>
            <person name="Itoh T."/>
            <person name="Shigeta K."/>
            <person name="Senba T."/>
            <person name="Matsumura K."/>
            <person name="Nakajima Y."/>
            <person name="Mizuno T."/>
            <person name="Morinaga M."/>
            <person name="Sasaki M."/>
            <person name="Togashi T."/>
            <person name="Oyama M."/>
            <person name="Hata H."/>
            <person name="Watanabe M."/>
            <person name="Komatsu T."/>
            <person name="Mizushima-Sugano J."/>
            <person name="Satoh T."/>
            <person name="Shirai Y."/>
            <person name="Takahashi Y."/>
            <person name="Nakagawa K."/>
            <person name="Okumura K."/>
            <person name="Nagase T."/>
            <person name="Nomura N."/>
            <person name="Kikuchi H."/>
            <person name="Masuho Y."/>
            <person name="Yamashita R."/>
            <person name="Nakai K."/>
            <person name="Yada T."/>
            <person name="Nakamura Y."/>
            <person name="Ohara O."/>
            <person name="Isogai T."/>
            <person name="Sugano S."/>
        </authorList>
    </citation>
    <scope>NUCLEOTIDE SEQUENCE [LARGE SCALE MRNA] (ISOFORM 1)</scope>
    <scope>VARIANT THR-544</scope>
    <source>
        <tissue>Colon</tissue>
        <tissue>Placenta</tissue>
        <tissue>Trachea</tissue>
    </source>
</reference>
<reference key="3">
    <citation type="submission" date="2005-09" db="EMBL/GenBank/DDBJ databases">
        <authorList>
            <person name="Mural R.J."/>
            <person name="Istrail S."/>
            <person name="Sutton G.G."/>
            <person name="Florea L."/>
            <person name="Halpern A.L."/>
            <person name="Mobarry C.M."/>
            <person name="Lippert R."/>
            <person name="Walenz B."/>
            <person name="Shatkay H."/>
            <person name="Dew I."/>
            <person name="Miller J.R."/>
            <person name="Flanigan M.J."/>
            <person name="Edwards N.J."/>
            <person name="Bolanos R."/>
            <person name="Fasulo D."/>
            <person name="Halldorsson B.V."/>
            <person name="Hannenhalli S."/>
            <person name="Turner R."/>
            <person name="Yooseph S."/>
            <person name="Lu F."/>
            <person name="Nusskern D.R."/>
            <person name="Shue B.C."/>
            <person name="Zheng X.H."/>
            <person name="Zhong F."/>
            <person name="Delcher A.L."/>
            <person name="Huson D.H."/>
            <person name="Kravitz S.A."/>
            <person name="Mouchard L."/>
            <person name="Reinert K."/>
            <person name="Remington K.A."/>
            <person name="Clark A.G."/>
            <person name="Waterman M.S."/>
            <person name="Eichler E.E."/>
            <person name="Adams M.D."/>
            <person name="Hunkapiller M.W."/>
            <person name="Myers E.W."/>
            <person name="Venter J.C."/>
        </authorList>
    </citation>
    <scope>NUCLEOTIDE SEQUENCE [LARGE SCALE GENOMIC DNA]</scope>
</reference>
<reference key="4">
    <citation type="journal article" date="2004" name="Genome Res.">
        <title>The status, quality, and expansion of the NIH full-length cDNA project: the Mammalian Gene Collection (MGC).</title>
        <authorList>
            <consortium name="The MGC Project Team"/>
        </authorList>
    </citation>
    <scope>NUCLEOTIDE SEQUENCE [LARGE SCALE MRNA] (ISOFORM 2)</scope>
    <source>
        <tissue>Placenta</tissue>
    </source>
</reference>
<protein>
    <recommendedName>
        <fullName>Epsin-3</fullName>
    </recommendedName>
    <alternativeName>
        <fullName>EPS-15-interacting protein 3</fullName>
    </alternativeName>
</protein>